<accession>P0DJV5</accession>
<organism>
    <name type="scientific">Influenza A virus (strain A/Turkey/Ireland/1378/1983 H5N8)</name>
    <dbReference type="NCBI Taxonomy" id="380285"/>
    <lineage>
        <taxon>Viruses</taxon>
        <taxon>Riboviria</taxon>
        <taxon>Orthornavirae</taxon>
        <taxon>Negarnaviricota</taxon>
        <taxon>Polyploviricotina</taxon>
        <taxon>Insthoviricetes</taxon>
        <taxon>Articulavirales</taxon>
        <taxon>Orthomyxoviridae</taxon>
        <taxon>Alphainfluenzavirus</taxon>
        <taxon>Alphainfluenzavirus influenzae</taxon>
        <taxon>Influenza A virus</taxon>
    </lineage>
</organism>
<evidence type="ECO:0000250" key="1">
    <source>
        <dbReference type="UniProtKB" id="P0CK64"/>
    </source>
</evidence>
<evidence type="ECO:0000250" key="2">
    <source>
        <dbReference type="UniProtKB" id="P0CK68"/>
    </source>
</evidence>
<evidence type="ECO:0000250" key="3">
    <source>
        <dbReference type="UniProtKB" id="P0DJW8"/>
    </source>
</evidence>
<evidence type="ECO:0000250" key="4">
    <source>
        <dbReference type="UniProtKB" id="P0DXO5"/>
    </source>
</evidence>
<evidence type="ECO:0000305" key="5"/>
<proteinExistence type="inferred from homology"/>
<reference key="1">
    <citation type="journal article" date="2006" name="Science">
        <title>Large-scale sequence analysis of avian influenza isolates.</title>
        <authorList>
            <person name="Obenauer J.C."/>
            <person name="Denson J."/>
            <person name="Mehta P.K."/>
            <person name="Su X."/>
            <person name="Mukatira S."/>
            <person name="Finkelstein D.B."/>
            <person name="Xu X."/>
            <person name="Wang J."/>
            <person name="Ma J."/>
            <person name="Fan Y."/>
            <person name="Rakestraw K.M."/>
            <person name="Webster R.G."/>
            <person name="Hoffmann E."/>
            <person name="Krauss S."/>
            <person name="Zheng J."/>
            <person name="Zhang Z."/>
            <person name="Naeve C.W."/>
        </authorList>
    </citation>
    <scope>NUCLEOTIDE SEQUENCE [GENOMIC RNA]</scope>
</reference>
<gene>
    <name type="primary">PA</name>
</gene>
<protein>
    <recommendedName>
        <fullName>Protein PA-X</fullName>
    </recommendedName>
</protein>
<name>PAX_I83A4</name>
<comment type="function">
    <text evidence="1 4">Plays a major role in the shutoff of the host protein expression by cleaving mRNAs probably via an endonuclease activity. This host shutoff allows the virus to escape from the host antiviral response (By similarity). Hijacks host RNA splicing machinery to selectively target host RNAs containing introns for destruction. This may explain the preferential degradation of RNAs that have undergone co- or post-transcriptional processing (By similarity).</text>
</comment>
<comment type="subcellular location">
    <subcellularLocation>
        <location evidence="4">Host cytoplasm</location>
    </subcellularLocation>
    <subcellularLocation>
        <location evidence="4">Host nucleus</location>
    </subcellularLocation>
</comment>
<comment type="alternative products">
    <event type="ribosomal frameshifting"/>
    <isoform>
        <id>P0DJV5-1</id>
        <name>PA-X</name>
        <sequence type="displayed"/>
    </isoform>
    <isoform>
        <id>Q0A2F8-1</id>
        <name>PA</name>
        <sequence type="external"/>
    </isoform>
</comment>
<comment type="domain">
    <text evidence="1 4">The probable endonuclease active site in the N-terminus and the basic amino acid cluster in the C-terminus are important for the shutoff activity. The C-terminus acts as a nuclear localization signal (By similarity). The C-terminus is recruited to host protein complexes involved in nuclear Pol II RNA processing (By similarity).</text>
</comment>
<comment type="similarity">
    <text evidence="5">Belongs to the influenza viruses PA-X family.</text>
</comment>
<feature type="chain" id="PRO_0000419418" description="Protein PA-X">
    <location>
        <begin position="1"/>
        <end position="252"/>
    </location>
</feature>
<feature type="active site" evidence="2">
    <location>
        <position position="80"/>
    </location>
</feature>
<feature type="active site" evidence="2">
    <location>
        <position position="108"/>
    </location>
</feature>
<feature type="site" description="Important for efficient shutoff activity and nuclear localization" evidence="4">
    <location>
        <position position="195"/>
    </location>
</feature>
<feature type="site" description="Important for efficient shutoff activity and nuclear localization" evidence="4">
    <location>
        <position position="198"/>
    </location>
</feature>
<feature type="site" description="Important for efficient shutoff activity and nuclear localization" evidence="4">
    <location>
        <position position="199"/>
    </location>
</feature>
<feature type="site" description="Important for efficient shutoff activity" evidence="3">
    <location>
        <position position="202"/>
    </location>
</feature>
<feature type="site" description="Important for efficient shutoff activity" evidence="3">
    <location>
        <position position="203"/>
    </location>
</feature>
<feature type="site" description="Important for efficient shutoff activity" evidence="3">
    <location>
        <position position="206"/>
    </location>
</feature>
<dbReference type="EMBL" id="CY015094">
    <property type="status" value="NOT_ANNOTATED_CDS"/>
    <property type="molecule type" value="Genomic_RNA"/>
</dbReference>
<dbReference type="SMR" id="P0DJV5"/>
<dbReference type="Proteomes" id="UP000008583">
    <property type="component" value="Genome"/>
</dbReference>
<dbReference type="GO" id="GO:0003723">
    <property type="term" value="F:RNA binding"/>
    <property type="evidence" value="ECO:0007669"/>
    <property type="project" value="InterPro"/>
</dbReference>
<dbReference type="GO" id="GO:0039694">
    <property type="term" value="P:viral RNA genome replication"/>
    <property type="evidence" value="ECO:0007669"/>
    <property type="project" value="InterPro"/>
</dbReference>
<dbReference type="GO" id="GO:0075523">
    <property type="term" value="P:viral translational frameshifting"/>
    <property type="evidence" value="ECO:0007669"/>
    <property type="project" value="UniProtKB-KW"/>
</dbReference>
<dbReference type="FunFam" id="3.40.91.90:FF:000001">
    <property type="entry name" value="Polymerase acidic protein"/>
    <property type="match status" value="1"/>
</dbReference>
<dbReference type="Gene3D" id="3.40.91.90">
    <property type="entry name" value="Influenza RNA-dependent RNA polymerase subunit PA, endonuclease domain"/>
    <property type="match status" value="1"/>
</dbReference>
<dbReference type="InterPro" id="IPR001009">
    <property type="entry name" value="PA/PA-X"/>
</dbReference>
<dbReference type="InterPro" id="IPR038372">
    <property type="entry name" value="PA/PA-X_sf"/>
</dbReference>
<dbReference type="Pfam" id="PF00603">
    <property type="entry name" value="Flu_PA"/>
    <property type="match status" value="1"/>
</dbReference>
<keyword id="KW-1132">Decay of host mRNAs by virus</keyword>
<keyword id="KW-1262">Eukaryotic host gene expression shutoff by virus</keyword>
<keyword id="KW-1035">Host cytoplasm</keyword>
<keyword id="KW-1190">Host gene expression shutoff by virus</keyword>
<keyword id="KW-1192">Host mRNA suppression by virus</keyword>
<keyword id="KW-1048">Host nucleus</keyword>
<keyword id="KW-0945">Host-virus interaction</keyword>
<keyword id="KW-0688">Ribosomal frameshifting</keyword>
<sequence>MEDFVRQCFNPMIVELAEKAMKEYGEDPKIETNKFAAICTHLEACFMYSDFHFIDERGESTIVESGDPNALLKHRFEIIEGRDRTMAWTVVNSICNTTGVEKPKFLPDLYDYKENRFIEIGVTRREVHIYYLEKANKIKSEKTHIHIFSFTGEEMATKADYTLDEESRARIKTRLFTIRQEMASRGLWDSFVSPREAKRQLKKDLKSQEPCVGLPTKVSHRTSPALKTLEPMWMDSNRTAALRASFLKCQKK</sequence>
<organismHost>
    <name type="scientific">Aves</name>
    <dbReference type="NCBI Taxonomy" id="8782"/>
</organismHost>